<gene>
    <name evidence="2" type="primary">IRF5</name>
</gene>
<reference key="1">
    <citation type="journal article" date="2005" name="BMC Genomics">
        <title>Characterization of 954 bovine full-CDS cDNA sequences.</title>
        <authorList>
            <person name="Harhay G.P."/>
            <person name="Sonstegard T.S."/>
            <person name="Keele J.W."/>
            <person name="Heaton M.P."/>
            <person name="Clawson M.L."/>
            <person name="Snelling W.M."/>
            <person name="Wiedmann R.T."/>
            <person name="Van Tassell C.P."/>
            <person name="Smith T.P.L."/>
        </authorList>
    </citation>
    <scope>NUCLEOTIDE SEQUENCE [LARGE SCALE MRNA]</scope>
</reference>
<evidence type="ECO:0000250" key="1">
    <source>
        <dbReference type="UniProtKB" id="P56477"/>
    </source>
</evidence>
<evidence type="ECO:0000250" key="2">
    <source>
        <dbReference type="UniProtKB" id="Q13568"/>
    </source>
</evidence>
<evidence type="ECO:0000255" key="3">
    <source>
        <dbReference type="PROSITE-ProRule" id="PRU00840"/>
    </source>
</evidence>
<evidence type="ECO:0000256" key="4">
    <source>
        <dbReference type="SAM" id="MobiDB-lite"/>
    </source>
</evidence>
<dbReference type="EMBL" id="BT021607">
    <property type="protein sequence ID" value="AAX46454.1"/>
    <property type="molecule type" value="mRNA"/>
</dbReference>
<dbReference type="RefSeq" id="NP_001030542.1">
    <property type="nucleotide sequence ID" value="NM_001035465.1"/>
</dbReference>
<dbReference type="SMR" id="Q58DJ0"/>
<dbReference type="FunCoup" id="Q58DJ0">
    <property type="interactions" value="633"/>
</dbReference>
<dbReference type="STRING" id="9913.ENSBTAP00000006567"/>
<dbReference type="PaxDb" id="9913-ENSBTAP00000006567"/>
<dbReference type="GeneID" id="615340"/>
<dbReference type="KEGG" id="bta:615340"/>
<dbReference type="CTD" id="3663"/>
<dbReference type="eggNOG" id="ENOG502QSKM">
    <property type="taxonomic scope" value="Eukaryota"/>
</dbReference>
<dbReference type="InParanoid" id="Q58DJ0"/>
<dbReference type="OrthoDB" id="9856880at2759"/>
<dbReference type="Proteomes" id="UP000009136">
    <property type="component" value="Unplaced"/>
</dbReference>
<dbReference type="GO" id="GO:0005737">
    <property type="term" value="C:cytoplasm"/>
    <property type="evidence" value="ECO:0000250"/>
    <property type="project" value="UniProtKB"/>
</dbReference>
<dbReference type="GO" id="GO:0005634">
    <property type="term" value="C:nucleus"/>
    <property type="evidence" value="ECO:0000318"/>
    <property type="project" value="GO_Central"/>
</dbReference>
<dbReference type="GO" id="GO:0000981">
    <property type="term" value="F:DNA-binding transcription factor activity, RNA polymerase II-specific"/>
    <property type="evidence" value="ECO:0000250"/>
    <property type="project" value="UniProtKB"/>
</dbReference>
<dbReference type="GO" id="GO:0000978">
    <property type="term" value="F:RNA polymerase II cis-regulatory region sequence-specific DNA binding"/>
    <property type="evidence" value="ECO:0000318"/>
    <property type="project" value="GO_Central"/>
</dbReference>
<dbReference type="GO" id="GO:0019221">
    <property type="term" value="P:cytokine-mediated signaling pathway"/>
    <property type="evidence" value="ECO:0000250"/>
    <property type="project" value="UniProtKB"/>
</dbReference>
<dbReference type="GO" id="GO:0051607">
    <property type="term" value="P:defense response to virus"/>
    <property type="evidence" value="ECO:0007669"/>
    <property type="project" value="UniProtKB-KW"/>
</dbReference>
<dbReference type="GO" id="GO:0002376">
    <property type="term" value="P:immune system process"/>
    <property type="evidence" value="ECO:0000318"/>
    <property type="project" value="GO_Central"/>
</dbReference>
<dbReference type="GO" id="GO:0006954">
    <property type="term" value="P:inflammatory response"/>
    <property type="evidence" value="ECO:0007669"/>
    <property type="project" value="UniProtKB-KW"/>
</dbReference>
<dbReference type="GO" id="GO:0045087">
    <property type="term" value="P:innate immune response"/>
    <property type="evidence" value="ECO:0000250"/>
    <property type="project" value="UniProtKB"/>
</dbReference>
<dbReference type="GO" id="GO:0045944">
    <property type="term" value="P:positive regulation of transcription by RNA polymerase II"/>
    <property type="evidence" value="ECO:0000250"/>
    <property type="project" value="UniProtKB"/>
</dbReference>
<dbReference type="GO" id="GO:0032481">
    <property type="term" value="P:positive regulation of type I interferon production"/>
    <property type="evidence" value="ECO:0000250"/>
    <property type="project" value="UniProtKB"/>
</dbReference>
<dbReference type="GO" id="GO:0006357">
    <property type="term" value="P:regulation of transcription by RNA polymerase II"/>
    <property type="evidence" value="ECO:0000318"/>
    <property type="project" value="GO_Central"/>
</dbReference>
<dbReference type="CDD" id="cd00103">
    <property type="entry name" value="IRF"/>
    <property type="match status" value="1"/>
</dbReference>
<dbReference type="FunFam" id="2.60.200.10:FF:000003">
    <property type="entry name" value="Interferon regulatory factor 5"/>
    <property type="match status" value="1"/>
</dbReference>
<dbReference type="FunFam" id="1.10.10.10:FF:000093">
    <property type="entry name" value="Putative interferon regulatory factor 6"/>
    <property type="match status" value="1"/>
</dbReference>
<dbReference type="Gene3D" id="2.60.200.10">
    <property type="match status" value="1"/>
</dbReference>
<dbReference type="Gene3D" id="1.10.10.10">
    <property type="entry name" value="Winged helix-like DNA-binding domain superfamily/Winged helix DNA-binding domain"/>
    <property type="match status" value="1"/>
</dbReference>
<dbReference type="InterPro" id="IPR019817">
    <property type="entry name" value="Interferon_reg_fac_CS"/>
</dbReference>
<dbReference type="InterPro" id="IPR001346">
    <property type="entry name" value="Interferon_reg_fact_DNA-bd_dom"/>
</dbReference>
<dbReference type="InterPro" id="IPR019471">
    <property type="entry name" value="Interferon_reg_factor-3"/>
</dbReference>
<dbReference type="InterPro" id="IPR017855">
    <property type="entry name" value="SMAD-like_dom_sf"/>
</dbReference>
<dbReference type="InterPro" id="IPR008984">
    <property type="entry name" value="SMAD_FHA_dom_sf"/>
</dbReference>
<dbReference type="InterPro" id="IPR036388">
    <property type="entry name" value="WH-like_DNA-bd_sf"/>
</dbReference>
<dbReference type="InterPro" id="IPR036390">
    <property type="entry name" value="WH_DNA-bd_sf"/>
</dbReference>
<dbReference type="PANTHER" id="PTHR11949">
    <property type="entry name" value="INTERFERON REGULATORY FACTOR"/>
    <property type="match status" value="1"/>
</dbReference>
<dbReference type="PANTHER" id="PTHR11949:SF10">
    <property type="entry name" value="INTERFERON REGULATORY FACTOR 5"/>
    <property type="match status" value="1"/>
</dbReference>
<dbReference type="Pfam" id="PF00605">
    <property type="entry name" value="IRF"/>
    <property type="match status" value="1"/>
</dbReference>
<dbReference type="Pfam" id="PF10401">
    <property type="entry name" value="IRF-3"/>
    <property type="match status" value="1"/>
</dbReference>
<dbReference type="PRINTS" id="PR00267">
    <property type="entry name" value="INTFRNREGFCT"/>
</dbReference>
<dbReference type="SMART" id="SM00348">
    <property type="entry name" value="IRF"/>
    <property type="match status" value="1"/>
</dbReference>
<dbReference type="SMART" id="SM01243">
    <property type="entry name" value="IRF-3"/>
    <property type="match status" value="1"/>
</dbReference>
<dbReference type="SUPFAM" id="SSF49879">
    <property type="entry name" value="SMAD/FHA domain"/>
    <property type="match status" value="1"/>
</dbReference>
<dbReference type="SUPFAM" id="SSF46785">
    <property type="entry name" value="Winged helix' DNA-binding domain"/>
    <property type="match status" value="1"/>
</dbReference>
<dbReference type="PROSITE" id="PS00601">
    <property type="entry name" value="IRF_1"/>
    <property type="match status" value="1"/>
</dbReference>
<dbReference type="PROSITE" id="PS51507">
    <property type="entry name" value="IRF_2"/>
    <property type="match status" value="1"/>
</dbReference>
<feature type="chain" id="PRO_0000271387" description="Interferon regulatory factor 5">
    <location>
        <begin position="1"/>
        <end position="499"/>
    </location>
</feature>
<feature type="DNA-binding region" description="IRF tryptophan pentad repeat" evidence="3">
    <location>
        <begin position="14"/>
        <end position="122"/>
    </location>
</feature>
<feature type="region of interest" description="Disordered" evidence="4">
    <location>
        <begin position="121"/>
        <end position="142"/>
    </location>
</feature>
<feature type="short sequence motif" description="Nuclear localization signal" evidence="2">
    <location>
        <begin position="12"/>
        <end position="18"/>
    </location>
</feature>
<feature type="short sequence motif" description="Nuclear export signal" evidence="2">
    <location>
        <begin position="145"/>
        <end position="155"/>
    </location>
</feature>
<feature type="modified residue" description="Phosphoserine; by TBK1" evidence="2">
    <location>
        <position position="153"/>
    </location>
</feature>
<feature type="modified residue" description="Phosphoserine; by TBK1" evidence="2">
    <location>
        <position position="294"/>
    </location>
</feature>
<feature type="modified residue" description="Phosphoserine" evidence="2">
    <location>
        <position position="302"/>
    </location>
</feature>
<feature type="modified residue" description="Phosphoserine" evidence="1">
    <location>
        <position position="432"/>
    </location>
</feature>
<feature type="modified residue" description="Phosphoserine" evidence="2">
    <location>
        <position position="436"/>
    </location>
</feature>
<feature type="modified residue" description="Phosphoserine" evidence="2">
    <location>
        <position position="438"/>
    </location>
</feature>
<feature type="modified residue" description="Phosphoserine" evidence="2">
    <location>
        <position position="441"/>
    </location>
</feature>
<feature type="modified residue" description="Phosphoserine" evidence="2">
    <location>
        <position position="447"/>
    </location>
</feature>
<feature type="cross-link" description="Glycyl lysine isopeptide (Lys-Gly) (interchain with G-Cter in ubiquitin)" evidence="2">
    <location>
        <position position="412"/>
    </location>
</feature>
<feature type="cross-link" description="Glycyl lysine isopeptide (Lys-Gly) (interchain with G-Cter in ubiquitin)" evidence="2">
    <location>
        <position position="413"/>
    </location>
</feature>
<comment type="function">
    <text evidence="1">Transcription factor that plays a critical role in innate immunity by activating expression of type I interferon (IFN) IFNA and INFB and inflammatory cytokines downstream of endolysosomal toll-like receptors TLR7, TLR8 and TLR9. Regulates the transcription of type I IFN genes (IFN-alpha and IFN-beta) and IFN-stimulated genes (ISG) by binding to an interferon-stimulated response element (ISRE) in their promoters. Can efficiently activate both the IFN-beta (IFNB) and the IFN-alpha (IFNA) genes and mediate their induction downstream of the TLR-activated, MyD88-dependent pathway.</text>
</comment>
<comment type="activity regulation">
    <text evidence="1 2">Maintained as a monomer in an autoinhibited state (By similarity). Phosphorylation and activation follow the following steps: innate adapter protein TASL recruits IRF5, thereby licensing IRF5 for phosphorylation by IKBKB (By similarity). Phosphorylated IRF5 dissociates from the adapter proteins, dimerizes, and then enters the nucleus to induce IFNs (By similarity).</text>
</comment>
<comment type="subunit">
    <text evidence="1 2">Homodimer, when phosphorylated (By similarity). Interacts with TASL (via pLxIS motif); interaction takes place downstream of TLR7, TLR8 or TLR9, leading to its activation (By similarity). Interacts with MYD88 and TRAF6 (By similarity).</text>
</comment>
<comment type="subcellular location">
    <subcellularLocation>
        <location evidence="1">Cytoplasm</location>
    </subcellularLocation>
    <subcellularLocation>
        <location evidence="1">Nucleus</location>
    </subcellularLocation>
    <text evidence="1">Shuttles between the nucleus and the cytoplasm: upon activation by the TLR adapter MYD88 and subsequent phosphorylation, translocates to the nucleus.</text>
</comment>
<comment type="PTM">
    <text evidence="2">Phosphorylation of serine and threonine residues by IKBKB in a C-terminal autoinhibitory region, stimulates dimerization, transport into the nucleus, assembly with the coactivator CBP/EP300 and initiation of transcription.</text>
</comment>
<comment type="PTM">
    <text evidence="1">'Lys-63'-linked polyubiquitination by TRAF6 is required for activation.</text>
</comment>
<comment type="similarity">
    <text evidence="3">Belongs to the IRF family.</text>
</comment>
<sequence length="499" mass="55931">MNQPAPAALLPPRRVRLKPWLVAQVNSCQYPGLQWVNGEKKLFYIPWRHATRHGPSHDGDNTIFKAWAKETGKYTEGVDEADPAKWKANLRCALNKSRDFRLIYDGPRDMPPQPYKVYEVCSNGPAPAESQPSEDNAEEEEEEELQKMLPGLSITEAVQPGPAMAPYSLPKEDVKWPPTLQPPVVLAPPAPGPNLLVPAPGNAADFGEVFSEVLPSSQPQPGSLSTSLAPTGEQLLPDLLISPHMLPLTDLEIKFQYRGRPPRALTISNPQSCRLLYSQLEATQEQVELFGPVSLEQVRFPSPEDIPSEKQRFYTNQLLDVLDRGLILQIQGQDLYAIRLCQCKVFWSGPCASAQGSHPNPIQREVKTKLFSLEDFLNELILFQKGQTNTPPPFEIFFCFGEEWPDCKPREKKLITVQVVPVAARMLLEMFSGELSWSADSIRLQISNPDLKDRMVEQFKELHHIWLSQQHLQPVAQTPAMPGLSAAQGPWPMHPVGMQ</sequence>
<proteinExistence type="evidence at transcript level"/>
<organism>
    <name type="scientific">Bos taurus</name>
    <name type="common">Bovine</name>
    <dbReference type="NCBI Taxonomy" id="9913"/>
    <lineage>
        <taxon>Eukaryota</taxon>
        <taxon>Metazoa</taxon>
        <taxon>Chordata</taxon>
        <taxon>Craniata</taxon>
        <taxon>Vertebrata</taxon>
        <taxon>Euteleostomi</taxon>
        <taxon>Mammalia</taxon>
        <taxon>Eutheria</taxon>
        <taxon>Laurasiatheria</taxon>
        <taxon>Artiodactyla</taxon>
        <taxon>Ruminantia</taxon>
        <taxon>Pecora</taxon>
        <taxon>Bovidae</taxon>
        <taxon>Bovinae</taxon>
        <taxon>Bos</taxon>
    </lineage>
</organism>
<accession>Q58DJ0</accession>
<keyword id="KW-0051">Antiviral defense</keyword>
<keyword id="KW-0963">Cytoplasm</keyword>
<keyword id="KW-0238">DNA-binding</keyword>
<keyword id="KW-0391">Immunity</keyword>
<keyword id="KW-0395">Inflammatory response</keyword>
<keyword id="KW-0399">Innate immunity</keyword>
<keyword id="KW-1017">Isopeptide bond</keyword>
<keyword id="KW-0539">Nucleus</keyword>
<keyword id="KW-0597">Phosphoprotein</keyword>
<keyword id="KW-1185">Reference proteome</keyword>
<keyword id="KW-0804">Transcription</keyword>
<keyword id="KW-0805">Transcription regulation</keyword>
<keyword id="KW-0832">Ubl conjugation</keyword>
<protein>
    <recommendedName>
        <fullName evidence="2">Interferon regulatory factor 5</fullName>
        <shortName evidence="2">IRF-5</shortName>
    </recommendedName>
</protein>
<name>IRF5_BOVIN</name>